<reference key="1">
    <citation type="journal article" date="2007" name="Proc. Natl. Acad. Sci. U.S.A.">
        <title>Deep-sea vent epsilon-proteobacterial genomes provide insights into emergence of pathogens.</title>
        <authorList>
            <person name="Nakagawa S."/>
            <person name="Takaki Y."/>
            <person name="Shimamura S."/>
            <person name="Reysenbach A.-L."/>
            <person name="Takai K."/>
            <person name="Horikoshi K."/>
        </authorList>
    </citation>
    <scope>NUCLEOTIDE SEQUENCE [LARGE SCALE GENOMIC DNA]</scope>
    <source>
        <strain>SB155-2</strain>
    </source>
</reference>
<name>FMT_NITSB</name>
<comment type="function">
    <text evidence="1">Attaches a formyl group to the free amino group of methionyl-tRNA(fMet). The formyl group appears to play a dual role in the initiator identity of N-formylmethionyl-tRNA by promoting its recognition by IF2 and preventing the misappropriation of this tRNA by the elongation apparatus.</text>
</comment>
<comment type="catalytic activity">
    <reaction evidence="1">
        <text>L-methionyl-tRNA(fMet) + (6R)-10-formyltetrahydrofolate = N-formyl-L-methionyl-tRNA(fMet) + (6S)-5,6,7,8-tetrahydrofolate + H(+)</text>
        <dbReference type="Rhea" id="RHEA:24380"/>
        <dbReference type="Rhea" id="RHEA-COMP:9952"/>
        <dbReference type="Rhea" id="RHEA-COMP:9953"/>
        <dbReference type="ChEBI" id="CHEBI:15378"/>
        <dbReference type="ChEBI" id="CHEBI:57453"/>
        <dbReference type="ChEBI" id="CHEBI:78530"/>
        <dbReference type="ChEBI" id="CHEBI:78844"/>
        <dbReference type="ChEBI" id="CHEBI:195366"/>
        <dbReference type="EC" id="2.1.2.9"/>
    </reaction>
</comment>
<comment type="similarity">
    <text evidence="1">Belongs to the Fmt family.</text>
</comment>
<organism>
    <name type="scientific">Nitratiruptor sp. (strain SB155-2)</name>
    <dbReference type="NCBI Taxonomy" id="387092"/>
    <lineage>
        <taxon>Bacteria</taxon>
        <taxon>Pseudomonadati</taxon>
        <taxon>Campylobacterota</taxon>
        <taxon>Epsilonproteobacteria</taxon>
        <taxon>Nautiliales</taxon>
        <taxon>Nitratiruptoraceae</taxon>
        <taxon>Nitratiruptor</taxon>
    </lineage>
</organism>
<dbReference type="EC" id="2.1.2.9" evidence="1"/>
<dbReference type="EMBL" id="AP009178">
    <property type="protein sequence ID" value="BAF70338.1"/>
    <property type="molecule type" value="Genomic_DNA"/>
</dbReference>
<dbReference type="RefSeq" id="WP_012082601.1">
    <property type="nucleotide sequence ID" value="NC_009662.1"/>
</dbReference>
<dbReference type="SMR" id="A6Q4C9"/>
<dbReference type="FunCoup" id="A6Q4C9">
    <property type="interactions" value="428"/>
</dbReference>
<dbReference type="STRING" id="387092.NIS_1229"/>
<dbReference type="KEGG" id="nis:NIS_1229"/>
<dbReference type="eggNOG" id="COG0223">
    <property type="taxonomic scope" value="Bacteria"/>
</dbReference>
<dbReference type="HOGENOM" id="CLU_033347_1_1_7"/>
<dbReference type="InParanoid" id="A6Q4C9"/>
<dbReference type="OrthoDB" id="9802815at2"/>
<dbReference type="Proteomes" id="UP000001118">
    <property type="component" value="Chromosome"/>
</dbReference>
<dbReference type="GO" id="GO:0005829">
    <property type="term" value="C:cytosol"/>
    <property type="evidence" value="ECO:0007669"/>
    <property type="project" value="TreeGrafter"/>
</dbReference>
<dbReference type="GO" id="GO:0004479">
    <property type="term" value="F:methionyl-tRNA formyltransferase activity"/>
    <property type="evidence" value="ECO:0007669"/>
    <property type="project" value="UniProtKB-UniRule"/>
</dbReference>
<dbReference type="CDD" id="cd08646">
    <property type="entry name" value="FMT_core_Met-tRNA-FMT_N"/>
    <property type="match status" value="1"/>
</dbReference>
<dbReference type="CDD" id="cd08704">
    <property type="entry name" value="Met_tRNA_FMT_C"/>
    <property type="match status" value="1"/>
</dbReference>
<dbReference type="Gene3D" id="3.40.50.12230">
    <property type="match status" value="1"/>
</dbReference>
<dbReference type="HAMAP" id="MF_00182">
    <property type="entry name" value="Formyl_trans"/>
    <property type="match status" value="1"/>
</dbReference>
<dbReference type="InterPro" id="IPR005794">
    <property type="entry name" value="Fmt"/>
</dbReference>
<dbReference type="InterPro" id="IPR005793">
    <property type="entry name" value="Formyl_trans_C"/>
</dbReference>
<dbReference type="InterPro" id="IPR002376">
    <property type="entry name" value="Formyl_transf_N"/>
</dbReference>
<dbReference type="InterPro" id="IPR036477">
    <property type="entry name" value="Formyl_transf_N_sf"/>
</dbReference>
<dbReference type="InterPro" id="IPR011034">
    <property type="entry name" value="Formyl_transferase-like_C_sf"/>
</dbReference>
<dbReference type="InterPro" id="IPR044135">
    <property type="entry name" value="Met-tRNA-FMT_C"/>
</dbReference>
<dbReference type="InterPro" id="IPR041711">
    <property type="entry name" value="Met-tRNA-FMT_N"/>
</dbReference>
<dbReference type="NCBIfam" id="TIGR00460">
    <property type="entry name" value="fmt"/>
    <property type="match status" value="1"/>
</dbReference>
<dbReference type="PANTHER" id="PTHR11138">
    <property type="entry name" value="METHIONYL-TRNA FORMYLTRANSFERASE"/>
    <property type="match status" value="1"/>
</dbReference>
<dbReference type="PANTHER" id="PTHR11138:SF5">
    <property type="entry name" value="METHIONYL-TRNA FORMYLTRANSFERASE, MITOCHONDRIAL"/>
    <property type="match status" value="1"/>
</dbReference>
<dbReference type="Pfam" id="PF02911">
    <property type="entry name" value="Formyl_trans_C"/>
    <property type="match status" value="1"/>
</dbReference>
<dbReference type="Pfam" id="PF00551">
    <property type="entry name" value="Formyl_trans_N"/>
    <property type="match status" value="1"/>
</dbReference>
<dbReference type="SUPFAM" id="SSF50486">
    <property type="entry name" value="FMT C-terminal domain-like"/>
    <property type="match status" value="1"/>
</dbReference>
<dbReference type="SUPFAM" id="SSF53328">
    <property type="entry name" value="Formyltransferase"/>
    <property type="match status" value="1"/>
</dbReference>
<accession>A6Q4C9</accession>
<gene>
    <name evidence="1" type="primary">fmt</name>
    <name type="ordered locus">NIS_1229</name>
</gene>
<evidence type="ECO:0000255" key="1">
    <source>
        <dbReference type="HAMAP-Rule" id="MF_00182"/>
    </source>
</evidence>
<protein>
    <recommendedName>
        <fullName evidence="1">Methionyl-tRNA formyltransferase</fullName>
        <ecNumber evidence="1">2.1.2.9</ecNumber>
    </recommendedName>
</protein>
<sequence length="302" mass="33628">MRIVFMGTPDYATTILEGLLEKFEVVGVFTQPDKPVGRKQVVTPPHVKKFLIEKNVDIPIFQPSTLKSEEVYEQLHTLAPDFIVVAAYGQILPKEILQLAPCINLHASLLPKYRGASPIQHALLNGDTVTGVTAMLMDEGLDTGDILAYDVIDIQNSDNAITLFEKLSHLAKELTPKVLQSFENIAPIAQHDVDASYCKKIRKQDGQIRFSDAKVIWNKYRAFIVWPGIFLENGLKLKEIDLVETDNTHEEGKILEISDAGVVVGCRRGSICIKSVQPPSKKAMEAVAYLRGKRLKVGDTFF</sequence>
<proteinExistence type="inferred from homology"/>
<keyword id="KW-0648">Protein biosynthesis</keyword>
<keyword id="KW-1185">Reference proteome</keyword>
<keyword id="KW-0808">Transferase</keyword>
<feature type="chain" id="PRO_1000203869" description="Methionyl-tRNA formyltransferase">
    <location>
        <begin position="1"/>
        <end position="302"/>
    </location>
</feature>
<feature type="binding site" evidence="1">
    <location>
        <begin position="108"/>
        <end position="111"/>
    </location>
    <ligand>
        <name>(6S)-5,6,7,8-tetrahydrofolate</name>
        <dbReference type="ChEBI" id="CHEBI:57453"/>
    </ligand>
</feature>